<accession>Q9UTP4</accession>
<keyword id="KW-0963">Cytoplasm</keyword>
<keyword id="KW-0539">Nucleus</keyword>
<keyword id="KW-1185">Reference proteome</keyword>
<name>YLL3_SCHPO</name>
<feature type="chain" id="PRO_0000303947" description="Smr domain-containing protein C11H11.03c">
    <location>
        <begin position="1"/>
        <end position="206"/>
    </location>
</feature>
<feature type="domain" description="Smr" evidence="1">
    <location>
        <begin position="75"/>
        <end position="150"/>
    </location>
</feature>
<sequence length="206" mass="23600">MEEYEKFRALASKEAEKRGYLFQEAQHAYSAGNKAKAHELSQEGKLCGERMENYNRQAASAIYLYKNSQCNPDEIDLHGLYIDEAVQAVQQRIENCIRRGDNHLHIIVGRGNHSANHVEKLRPAIVRMLEQQSIKYNSEVNEGRIYVYLPSATSPIQPNFNCIQEPQEAYSRPQHSTLTDQVEPEKIVEEIATNCFPRLKTCCAIM</sequence>
<dbReference type="EMBL" id="CU329670">
    <property type="protein sequence ID" value="CAB59799.1"/>
    <property type="molecule type" value="Genomic_DNA"/>
</dbReference>
<dbReference type="PIR" id="T37552">
    <property type="entry name" value="T37552"/>
</dbReference>
<dbReference type="RefSeq" id="NP_594721.1">
    <property type="nucleotide sequence ID" value="NM_001020149.2"/>
</dbReference>
<dbReference type="SMR" id="Q9UTP4"/>
<dbReference type="BioGRID" id="277941">
    <property type="interactions" value="12"/>
</dbReference>
<dbReference type="FunCoup" id="Q9UTP4">
    <property type="interactions" value="3"/>
</dbReference>
<dbReference type="STRING" id="284812.Q9UTP4"/>
<dbReference type="iPTMnet" id="Q9UTP4"/>
<dbReference type="PaxDb" id="4896-SPAC11H11.03c.1"/>
<dbReference type="EnsemblFungi" id="SPAC11H11.03c.1">
    <property type="protein sequence ID" value="SPAC11H11.03c.1:pep"/>
    <property type="gene ID" value="SPAC11H11.03c"/>
</dbReference>
<dbReference type="KEGG" id="spo:2541436"/>
<dbReference type="PomBase" id="SPAC11H11.03c"/>
<dbReference type="VEuPathDB" id="FungiDB:SPAC11H11.03c"/>
<dbReference type="eggNOG" id="KOG2401">
    <property type="taxonomic scope" value="Eukaryota"/>
</dbReference>
<dbReference type="HOGENOM" id="CLU_069447_2_0_1"/>
<dbReference type="InParanoid" id="Q9UTP4"/>
<dbReference type="OMA" id="DYIFREN"/>
<dbReference type="PhylomeDB" id="Q9UTP4"/>
<dbReference type="PRO" id="PR:Q9UTP4"/>
<dbReference type="Proteomes" id="UP000002485">
    <property type="component" value="Chromosome I"/>
</dbReference>
<dbReference type="GO" id="GO:0005829">
    <property type="term" value="C:cytosol"/>
    <property type="evidence" value="ECO:0007005"/>
    <property type="project" value="PomBase"/>
</dbReference>
<dbReference type="GO" id="GO:0005634">
    <property type="term" value="C:nucleus"/>
    <property type="evidence" value="ECO:0007005"/>
    <property type="project" value="PomBase"/>
</dbReference>
<dbReference type="GO" id="GO:0046404">
    <property type="term" value="F:ATP-dependent polydeoxyribonucleotide 5'-hydroxyl-kinase activity"/>
    <property type="evidence" value="ECO:0000250"/>
    <property type="project" value="PomBase"/>
</dbReference>
<dbReference type="GO" id="GO:0004519">
    <property type="term" value="F:endonuclease activity"/>
    <property type="evidence" value="ECO:0000250"/>
    <property type="project" value="PomBase"/>
</dbReference>
<dbReference type="GO" id="GO:0006281">
    <property type="term" value="P:DNA repair"/>
    <property type="evidence" value="ECO:0000255"/>
    <property type="project" value="PomBase"/>
</dbReference>
<dbReference type="Gene3D" id="3.30.1370.110">
    <property type="match status" value="1"/>
</dbReference>
<dbReference type="InterPro" id="IPR013899">
    <property type="entry name" value="DUF1771"/>
</dbReference>
<dbReference type="InterPro" id="IPR002625">
    <property type="entry name" value="Smr_dom"/>
</dbReference>
<dbReference type="InterPro" id="IPR036063">
    <property type="entry name" value="Smr_dom_sf"/>
</dbReference>
<dbReference type="InterPro" id="IPR053020">
    <property type="entry name" value="Smr_domain_protein"/>
</dbReference>
<dbReference type="PANTHER" id="PTHR47417">
    <property type="entry name" value="SMR DOMAIN-CONTAINING PROTEIN YPL199C"/>
    <property type="match status" value="1"/>
</dbReference>
<dbReference type="PANTHER" id="PTHR47417:SF1">
    <property type="entry name" value="SMR DOMAIN-CONTAINING PROTEIN YPL199C"/>
    <property type="match status" value="1"/>
</dbReference>
<dbReference type="Pfam" id="PF08590">
    <property type="entry name" value="DUF1771"/>
    <property type="match status" value="1"/>
</dbReference>
<dbReference type="Pfam" id="PF01713">
    <property type="entry name" value="Smr"/>
    <property type="match status" value="1"/>
</dbReference>
<dbReference type="SMART" id="SM01162">
    <property type="entry name" value="DUF1771"/>
    <property type="match status" value="1"/>
</dbReference>
<dbReference type="SMART" id="SM00463">
    <property type="entry name" value="SMR"/>
    <property type="match status" value="1"/>
</dbReference>
<dbReference type="SUPFAM" id="SSF160443">
    <property type="entry name" value="SMR domain-like"/>
    <property type="match status" value="1"/>
</dbReference>
<dbReference type="PROSITE" id="PS50828">
    <property type="entry name" value="SMR"/>
    <property type="match status" value="1"/>
</dbReference>
<reference key="1">
    <citation type="journal article" date="2002" name="Nature">
        <title>The genome sequence of Schizosaccharomyces pombe.</title>
        <authorList>
            <person name="Wood V."/>
            <person name="Gwilliam R."/>
            <person name="Rajandream M.A."/>
            <person name="Lyne M.H."/>
            <person name="Lyne R."/>
            <person name="Stewart A."/>
            <person name="Sgouros J.G."/>
            <person name="Peat N."/>
            <person name="Hayles J."/>
            <person name="Baker S.G."/>
            <person name="Basham D."/>
            <person name="Bowman S."/>
            <person name="Brooks K."/>
            <person name="Brown D."/>
            <person name="Brown S."/>
            <person name="Chillingworth T."/>
            <person name="Churcher C.M."/>
            <person name="Collins M."/>
            <person name="Connor R."/>
            <person name="Cronin A."/>
            <person name="Davis P."/>
            <person name="Feltwell T."/>
            <person name="Fraser A."/>
            <person name="Gentles S."/>
            <person name="Goble A."/>
            <person name="Hamlin N."/>
            <person name="Harris D.E."/>
            <person name="Hidalgo J."/>
            <person name="Hodgson G."/>
            <person name="Holroyd S."/>
            <person name="Hornsby T."/>
            <person name="Howarth S."/>
            <person name="Huckle E.J."/>
            <person name="Hunt S."/>
            <person name="Jagels K."/>
            <person name="James K.D."/>
            <person name="Jones L."/>
            <person name="Jones M."/>
            <person name="Leather S."/>
            <person name="McDonald S."/>
            <person name="McLean J."/>
            <person name="Mooney P."/>
            <person name="Moule S."/>
            <person name="Mungall K.L."/>
            <person name="Murphy L.D."/>
            <person name="Niblett D."/>
            <person name="Odell C."/>
            <person name="Oliver K."/>
            <person name="O'Neil S."/>
            <person name="Pearson D."/>
            <person name="Quail M.A."/>
            <person name="Rabbinowitsch E."/>
            <person name="Rutherford K.M."/>
            <person name="Rutter S."/>
            <person name="Saunders D."/>
            <person name="Seeger K."/>
            <person name="Sharp S."/>
            <person name="Skelton J."/>
            <person name="Simmonds M.N."/>
            <person name="Squares R."/>
            <person name="Squares S."/>
            <person name="Stevens K."/>
            <person name="Taylor K."/>
            <person name="Taylor R.G."/>
            <person name="Tivey A."/>
            <person name="Walsh S.V."/>
            <person name="Warren T."/>
            <person name="Whitehead S."/>
            <person name="Woodward J.R."/>
            <person name="Volckaert G."/>
            <person name="Aert R."/>
            <person name="Robben J."/>
            <person name="Grymonprez B."/>
            <person name="Weltjens I."/>
            <person name="Vanstreels E."/>
            <person name="Rieger M."/>
            <person name="Schaefer M."/>
            <person name="Mueller-Auer S."/>
            <person name="Gabel C."/>
            <person name="Fuchs M."/>
            <person name="Duesterhoeft A."/>
            <person name="Fritzc C."/>
            <person name="Holzer E."/>
            <person name="Moestl D."/>
            <person name="Hilbert H."/>
            <person name="Borzym K."/>
            <person name="Langer I."/>
            <person name="Beck A."/>
            <person name="Lehrach H."/>
            <person name="Reinhardt R."/>
            <person name="Pohl T.M."/>
            <person name="Eger P."/>
            <person name="Zimmermann W."/>
            <person name="Wedler H."/>
            <person name="Wambutt R."/>
            <person name="Purnelle B."/>
            <person name="Goffeau A."/>
            <person name="Cadieu E."/>
            <person name="Dreano S."/>
            <person name="Gloux S."/>
            <person name="Lelaure V."/>
            <person name="Mottier S."/>
            <person name="Galibert F."/>
            <person name="Aves S.J."/>
            <person name="Xiang Z."/>
            <person name="Hunt C."/>
            <person name="Moore K."/>
            <person name="Hurst S.M."/>
            <person name="Lucas M."/>
            <person name="Rochet M."/>
            <person name="Gaillardin C."/>
            <person name="Tallada V.A."/>
            <person name="Garzon A."/>
            <person name="Thode G."/>
            <person name="Daga R.R."/>
            <person name="Cruzado L."/>
            <person name="Jimenez J."/>
            <person name="Sanchez M."/>
            <person name="del Rey F."/>
            <person name="Benito J."/>
            <person name="Dominguez A."/>
            <person name="Revuelta J.L."/>
            <person name="Moreno S."/>
            <person name="Armstrong J."/>
            <person name="Forsburg S.L."/>
            <person name="Cerutti L."/>
            <person name="Lowe T."/>
            <person name="McCombie W.R."/>
            <person name="Paulsen I."/>
            <person name="Potashkin J."/>
            <person name="Shpakovski G.V."/>
            <person name="Ussery D."/>
            <person name="Barrell B.G."/>
            <person name="Nurse P."/>
        </authorList>
    </citation>
    <scope>NUCLEOTIDE SEQUENCE [LARGE SCALE GENOMIC DNA]</scope>
    <source>
        <strain>972 / ATCC 24843</strain>
    </source>
</reference>
<reference key="2">
    <citation type="journal article" date="2006" name="Nat. Biotechnol.">
        <title>ORFeome cloning and global analysis of protein localization in the fission yeast Schizosaccharomyces pombe.</title>
        <authorList>
            <person name="Matsuyama A."/>
            <person name="Arai R."/>
            <person name="Yashiroda Y."/>
            <person name="Shirai A."/>
            <person name="Kamata A."/>
            <person name="Sekido S."/>
            <person name="Kobayashi Y."/>
            <person name="Hashimoto A."/>
            <person name="Hamamoto M."/>
            <person name="Hiraoka Y."/>
            <person name="Horinouchi S."/>
            <person name="Yoshida M."/>
        </authorList>
    </citation>
    <scope>SUBCELLULAR LOCATION [LARGE SCALE ANALYSIS]</scope>
</reference>
<organism>
    <name type="scientific">Schizosaccharomyces pombe (strain 972 / ATCC 24843)</name>
    <name type="common">Fission yeast</name>
    <dbReference type="NCBI Taxonomy" id="284812"/>
    <lineage>
        <taxon>Eukaryota</taxon>
        <taxon>Fungi</taxon>
        <taxon>Dikarya</taxon>
        <taxon>Ascomycota</taxon>
        <taxon>Taphrinomycotina</taxon>
        <taxon>Schizosaccharomycetes</taxon>
        <taxon>Schizosaccharomycetales</taxon>
        <taxon>Schizosaccharomycetaceae</taxon>
        <taxon>Schizosaccharomyces</taxon>
    </lineage>
</organism>
<gene>
    <name type="ORF">SPAC11H11.03c</name>
</gene>
<comment type="subcellular location">
    <subcellularLocation>
        <location evidence="2">Cytoplasm</location>
    </subcellularLocation>
    <subcellularLocation>
        <location evidence="2">Nucleus</location>
    </subcellularLocation>
</comment>
<protein>
    <recommendedName>
        <fullName>Smr domain-containing protein C11H11.03c</fullName>
    </recommendedName>
</protein>
<evidence type="ECO:0000255" key="1">
    <source>
        <dbReference type="PROSITE-ProRule" id="PRU00321"/>
    </source>
</evidence>
<evidence type="ECO:0000269" key="2">
    <source>
    </source>
</evidence>
<proteinExistence type="predicted"/>